<dbReference type="EMBL" id="AE001439">
    <property type="protein sequence ID" value="AAD06911.1"/>
    <property type="molecule type" value="Genomic_DNA"/>
</dbReference>
<dbReference type="PIR" id="E71820">
    <property type="entry name" value="E71820"/>
</dbReference>
<dbReference type="RefSeq" id="WP_000906455.1">
    <property type="nucleotide sequence ID" value="NZ_CP011330.1"/>
</dbReference>
<dbReference type="SMR" id="Q9ZJH4"/>
<dbReference type="KEGG" id="hpj:jhp_1335"/>
<dbReference type="PATRIC" id="fig|85963.30.peg.1218"/>
<dbReference type="eggNOG" id="COG1551">
    <property type="taxonomic scope" value="Bacteria"/>
</dbReference>
<dbReference type="Proteomes" id="UP000000804">
    <property type="component" value="Chromosome"/>
</dbReference>
<dbReference type="GO" id="GO:0005829">
    <property type="term" value="C:cytosol"/>
    <property type="evidence" value="ECO:0007669"/>
    <property type="project" value="TreeGrafter"/>
</dbReference>
<dbReference type="GO" id="GO:0048027">
    <property type="term" value="F:mRNA 5'-UTR binding"/>
    <property type="evidence" value="ECO:0007669"/>
    <property type="project" value="UniProtKB-UniRule"/>
</dbReference>
<dbReference type="GO" id="GO:0044781">
    <property type="term" value="P:bacterial-type flagellum organization"/>
    <property type="evidence" value="ECO:0007669"/>
    <property type="project" value="UniProtKB-KW"/>
</dbReference>
<dbReference type="GO" id="GO:0006402">
    <property type="term" value="P:mRNA catabolic process"/>
    <property type="evidence" value="ECO:0007669"/>
    <property type="project" value="InterPro"/>
</dbReference>
<dbReference type="GO" id="GO:0045947">
    <property type="term" value="P:negative regulation of translational initiation"/>
    <property type="evidence" value="ECO:0007669"/>
    <property type="project" value="UniProtKB-UniRule"/>
</dbReference>
<dbReference type="GO" id="GO:1902208">
    <property type="term" value="P:regulation of bacterial-type flagellum assembly"/>
    <property type="evidence" value="ECO:0007669"/>
    <property type="project" value="UniProtKB-UniRule"/>
</dbReference>
<dbReference type="GO" id="GO:0006109">
    <property type="term" value="P:regulation of carbohydrate metabolic process"/>
    <property type="evidence" value="ECO:0007669"/>
    <property type="project" value="InterPro"/>
</dbReference>
<dbReference type="FunFam" id="2.60.40.4380:FF:000002">
    <property type="entry name" value="Translational regulator CsrA"/>
    <property type="match status" value="1"/>
</dbReference>
<dbReference type="Gene3D" id="2.60.40.4380">
    <property type="entry name" value="Translational regulator CsrA"/>
    <property type="match status" value="1"/>
</dbReference>
<dbReference type="HAMAP" id="MF_00167">
    <property type="entry name" value="CsrA"/>
    <property type="match status" value="1"/>
</dbReference>
<dbReference type="InterPro" id="IPR003751">
    <property type="entry name" value="CsrA"/>
</dbReference>
<dbReference type="InterPro" id="IPR036107">
    <property type="entry name" value="CsrA_sf"/>
</dbReference>
<dbReference type="NCBIfam" id="TIGR00202">
    <property type="entry name" value="csrA"/>
    <property type="match status" value="1"/>
</dbReference>
<dbReference type="NCBIfam" id="NF001844">
    <property type="entry name" value="PRK00568.1"/>
    <property type="match status" value="1"/>
</dbReference>
<dbReference type="PANTHER" id="PTHR34984">
    <property type="entry name" value="CARBON STORAGE REGULATOR"/>
    <property type="match status" value="1"/>
</dbReference>
<dbReference type="PANTHER" id="PTHR34984:SF1">
    <property type="entry name" value="CARBON STORAGE REGULATOR"/>
    <property type="match status" value="1"/>
</dbReference>
<dbReference type="Pfam" id="PF02599">
    <property type="entry name" value="CsrA"/>
    <property type="match status" value="1"/>
</dbReference>
<dbReference type="SUPFAM" id="SSF117130">
    <property type="entry name" value="CsrA-like"/>
    <property type="match status" value="1"/>
</dbReference>
<name>CSRA_HELPJ</name>
<comment type="function">
    <text evidence="1">A translational regulator that binds mRNA to regulate translation initiation and/or mRNA stability. Usually binds in the 5'-UTR at or near the Shine-Dalgarno sequence preventing ribosome-binding, thus repressing translation. Its main target seems to be the major flagellin gene, while its function is anatagonized by FliW.</text>
</comment>
<comment type="subunit">
    <text evidence="1">Homodimer; the beta-strands of each monomer intercalate to form a hydrophobic core, while the alpha-helices form wings that extend away from the core.</text>
</comment>
<comment type="subcellular location">
    <subcellularLocation>
        <location evidence="1">Cytoplasm</location>
    </subcellularLocation>
</comment>
<comment type="similarity">
    <text evidence="1">Belongs to the CsrA/RsmA family.</text>
</comment>
<gene>
    <name evidence="1" type="primary">csrA</name>
    <name type="ordered locus">jhp_1335</name>
</gene>
<accession>Q9ZJH4</accession>
<organism>
    <name type="scientific">Helicobacter pylori (strain J99 / ATCC 700824)</name>
    <name type="common">Campylobacter pylori J99</name>
    <dbReference type="NCBI Taxonomy" id="85963"/>
    <lineage>
        <taxon>Bacteria</taxon>
        <taxon>Pseudomonadati</taxon>
        <taxon>Campylobacterota</taxon>
        <taxon>Epsilonproteobacteria</taxon>
        <taxon>Campylobacterales</taxon>
        <taxon>Helicobacteraceae</taxon>
        <taxon>Helicobacter</taxon>
    </lineage>
</organism>
<sequence length="76" mass="8426">MLILSRKVNEGIVIDDNIHIKVISIDRGSVRLGFEAPESTLILRTELKEAIVSENQKASASVDESLLENIKKVIKP</sequence>
<protein>
    <recommendedName>
        <fullName evidence="1">Translational regulator CsrA</fullName>
    </recommendedName>
</protein>
<proteinExistence type="inferred from homology"/>
<keyword id="KW-1005">Bacterial flagellum biogenesis</keyword>
<keyword id="KW-0963">Cytoplasm</keyword>
<keyword id="KW-0678">Repressor</keyword>
<keyword id="KW-0694">RNA-binding</keyword>
<keyword id="KW-0810">Translation regulation</keyword>
<evidence type="ECO:0000255" key="1">
    <source>
        <dbReference type="HAMAP-Rule" id="MF_00167"/>
    </source>
</evidence>
<feature type="chain" id="PRO_0000177071" description="Translational regulator CsrA">
    <location>
        <begin position="1"/>
        <end position="76"/>
    </location>
</feature>
<reference key="1">
    <citation type="journal article" date="1999" name="Nature">
        <title>Genomic sequence comparison of two unrelated isolates of the human gastric pathogen Helicobacter pylori.</title>
        <authorList>
            <person name="Alm R.A."/>
            <person name="Ling L.-S.L."/>
            <person name="Moir D.T."/>
            <person name="King B.L."/>
            <person name="Brown E.D."/>
            <person name="Doig P.C."/>
            <person name="Smith D.R."/>
            <person name="Noonan B."/>
            <person name="Guild B.C."/>
            <person name="deJonge B.L."/>
            <person name="Carmel G."/>
            <person name="Tummino P.J."/>
            <person name="Caruso A."/>
            <person name="Uria-Nickelsen M."/>
            <person name="Mills D.M."/>
            <person name="Ives C."/>
            <person name="Gibson R."/>
            <person name="Merberg D."/>
            <person name="Mills S.D."/>
            <person name="Jiang Q."/>
            <person name="Taylor D.E."/>
            <person name="Vovis G.F."/>
            <person name="Trust T.J."/>
        </authorList>
    </citation>
    <scope>NUCLEOTIDE SEQUENCE [LARGE SCALE GENOMIC DNA]</scope>
    <source>
        <strain>J99 / ATCC 700824</strain>
    </source>
</reference>